<feature type="chain" id="PRO_0000442211" description="Butyryl-CoA dehydrogenase Swol_1933">
    <location>
        <begin position="1"/>
        <end position="610"/>
    </location>
</feature>
<feature type="active site" description="Proton acceptor" evidence="1">
    <location>
        <position position="451"/>
    </location>
</feature>
<name>BCD1_SYNWW</name>
<evidence type="ECO:0000250" key="1">
    <source>
        <dbReference type="UniProtKB" id="Q06319"/>
    </source>
</evidence>
<evidence type="ECO:0000250" key="2">
    <source>
        <dbReference type="UniProtKB" id="Q2LQP0"/>
    </source>
</evidence>
<evidence type="ECO:0000269" key="3">
    <source>
    </source>
</evidence>
<evidence type="ECO:0000269" key="4">
    <source>
    </source>
</evidence>
<evidence type="ECO:0000303" key="5">
    <source>
    </source>
</evidence>
<evidence type="ECO:0000303" key="6">
    <source>
    </source>
</evidence>
<evidence type="ECO:0000305" key="7"/>
<evidence type="ECO:0000305" key="8">
    <source>
    </source>
</evidence>
<evidence type="ECO:0000305" key="9">
    <source>
    </source>
</evidence>
<evidence type="ECO:0000312" key="10">
    <source>
        <dbReference type="EMBL" id="ABI69230.1"/>
    </source>
</evidence>
<keyword id="KW-0963">Cytoplasm</keyword>
<keyword id="KW-0274">FAD</keyword>
<keyword id="KW-0276">Fatty acid metabolism</keyword>
<keyword id="KW-0285">Flavoprotein</keyword>
<keyword id="KW-0443">Lipid metabolism</keyword>
<keyword id="KW-0560">Oxidoreductase</keyword>
<keyword id="KW-1185">Reference proteome</keyword>
<protein>
    <recommendedName>
        <fullName evidence="5 6">Butyryl-CoA dehydrogenase Swol_1933</fullName>
        <shortName evidence="5 6">BCD</shortName>
        <ecNumber evidence="3">1.3.8.1</ecNumber>
    </recommendedName>
</protein>
<dbReference type="EC" id="1.3.8.1" evidence="3"/>
<dbReference type="EMBL" id="CP000448">
    <property type="protein sequence ID" value="ABI69230.1"/>
    <property type="molecule type" value="Genomic_DNA"/>
</dbReference>
<dbReference type="RefSeq" id="WP_011641323.1">
    <property type="nucleotide sequence ID" value="NC_008346.1"/>
</dbReference>
<dbReference type="SMR" id="Q0AVM4"/>
<dbReference type="STRING" id="335541.Swol_1933"/>
<dbReference type="KEGG" id="swo:Swol_1933"/>
<dbReference type="eggNOG" id="COG1960">
    <property type="taxonomic scope" value="Bacteria"/>
</dbReference>
<dbReference type="HOGENOM" id="CLU_018204_12_2_9"/>
<dbReference type="OrthoDB" id="9802447at2"/>
<dbReference type="UniPathway" id="UPA00863"/>
<dbReference type="Proteomes" id="UP000001968">
    <property type="component" value="Chromosome"/>
</dbReference>
<dbReference type="GO" id="GO:0005737">
    <property type="term" value="C:cytoplasm"/>
    <property type="evidence" value="ECO:0007669"/>
    <property type="project" value="UniProtKB-SubCell"/>
</dbReference>
<dbReference type="GO" id="GO:0005886">
    <property type="term" value="C:plasma membrane"/>
    <property type="evidence" value="ECO:0007669"/>
    <property type="project" value="TreeGrafter"/>
</dbReference>
<dbReference type="GO" id="GO:0050660">
    <property type="term" value="F:flavin adenine dinucleotide binding"/>
    <property type="evidence" value="ECO:0007669"/>
    <property type="project" value="InterPro"/>
</dbReference>
<dbReference type="GO" id="GO:0016937">
    <property type="term" value="F:short-chain fatty acyl-CoA dehydrogenase activity"/>
    <property type="evidence" value="ECO:0007669"/>
    <property type="project" value="UniProtKB-EC"/>
</dbReference>
<dbReference type="GO" id="GO:0019605">
    <property type="term" value="P:butyrate metabolic process"/>
    <property type="evidence" value="ECO:0007669"/>
    <property type="project" value="UniProtKB-UniPathway"/>
</dbReference>
<dbReference type="Gene3D" id="1.10.540.10">
    <property type="entry name" value="Acyl-CoA dehydrogenase/oxidase, N-terminal domain"/>
    <property type="match status" value="1"/>
</dbReference>
<dbReference type="Gene3D" id="2.40.110.10">
    <property type="entry name" value="Butyryl-CoA Dehydrogenase, subunit A, domain 2"/>
    <property type="match status" value="1"/>
</dbReference>
<dbReference type="Gene3D" id="1.20.140.10">
    <property type="entry name" value="Butyryl-CoA Dehydrogenase, subunit A, domain 3"/>
    <property type="match status" value="1"/>
</dbReference>
<dbReference type="InterPro" id="IPR025878">
    <property type="entry name" value="Acyl-CoA_dh-like_C_dom"/>
</dbReference>
<dbReference type="InterPro" id="IPR006091">
    <property type="entry name" value="Acyl-CoA_Oxase/DH_mid-dom"/>
</dbReference>
<dbReference type="InterPro" id="IPR046373">
    <property type="entry name" value="Acyl-CoA_Oxase/DH_mid-dom_sf"/>
</dbReference>
<dbReference type="InterPro" id="IPR036250">
    <property type="entry name" value="AcylCo_DH-like_C"/>
</dbReference>
<dbReference type="InterPro" id="IPR009075">
    <property type="entry name" value="AcylCo_DH/oxidase_C"/>
</dbReference>
<dbReference type="InterPro" id="IPR037069">
    <property type="entry name" value="AcylCoA_DH/ox_N_sf"/>
</dbReference>
<dbReference type="InterPro" id="IPR009100">
    <property type="entry name" value="AcylCoA_DH/oxidase_NM_dom_sf"/>
</dbReference>
<dbReference type="InterPro" id="IPR052166">
    <property type="entry name" value="Diverse_Acyl-CoA_DH"/>
</dbReference>
<dbReference type="PANTHER" id="PTHR42803">
    <property type="entry name" value="ACYL-COA DEHYDROGENASE"/>
    <property type="match status" value="1"/>
</dbReference>
<dbReference type="PANTHER" id="PTHR42803:SF1">
    <property type="entry name" value="BROAD-SPECIFICITY LINEAR ACYL-COA DEHYDROGENASE FADE5"/>
    <property type="match status" value="1"/>
</dbReference>
<dbReference type="Pfam" id="PF00441">
    <property type="entry name" value="Acyl-CoA_dh_1"/>
    <property type="match status" value="1"/>
</dbReference>
<dbReference type="Pfam" id="PF12806">
    <property type="entry name" value="Acyl-CoA_dh_C"/>
    <property type="match status" value="1"/>
</dbReference>
<dbReference type="Pfam" id="PF02770">
    <property type="entry name" value="Acyl-CoA_dh_M"/>
    <property type="match status" value="1"/>
</dbReference>
<dbReference type="SUPFAM" id="SSF47203">
    <property type="entry name" value="Acyl-CoA dehydrogenase C-terminal domain-like"/>
    <property type="match status" value="1"/>
</dbReference>
<dbReference type="SUPFAM" id="SSF56645">
    <property type="entry name" value="Acyl-CoA dehydrogenase NM domain-like"/>
    <property type="match status" value="1"/>
</dbReference>
<comment type="function">
    <text evidence="3 9">Involved in syntrophic growth of S.wolfei with butyrate, as part of the butyrate oxidation pathway. Catalyzes the oxidation of butanoyl-CoA to crotonyl-CoA. Probably passes the electrons released by this reaction on to electron-transfer flavoproteins (EtfAB) to finally generate hydrogen and/or formate.</text>
</comment>
<comment type="catalytic activity">
    <reaction evidence="3">
        <text>butanoyl-CoA + oxidized [electron-transfer flavoprotein] + H(+) = (2E)-butenoyl-CoA + reduced [electron-transfer flavoprotein]</text>
        <dbReference type="Rhea" id="RHEA:24004"/>
        <dbReference type="Rhea" id="RHEA-COMP:10685"/>
        <dbReference type="Rhea" id="RHEA-COMP:10686"/>
        <dbReference type="ChEBI" id="CHEBI:15378"/>
        <dbReference type="ChEBI" id="CHEBI:57332"/>
        <dbReference type="ChEBI" id="CHEBI:57371"/>
        <dbReference type="ChEBI" id="CHEBI:57692"/>
        <dbReference type="ChEBI" id="CHEBI:58307"/>
        <dbReference type="EC" id="1.3.8.1"/>
    </reaction>
</comment>
<comment type="catalytic activity">
    <reaction evidence="3">
        <text>a short-chain 2,3-saturated fatty acyl-CoA + oxidized [electron-transfer flavoprotein] + H(+) = a short-chain (2E)-enoyl-CoA + reduced [electron-transfer flavoprotein]</text>
        <dbReference type="Rhea" id="RHEA:47196"/>
        <dbReference type="Rhea" id="RHEA-COMP:10685"/>
        <dbReference type="Rhea" id="RHEA-COMP:10686"/>
        <dbReference type="ChEBI" id="CHEBI:15378"/>
        <dbReference type="ChEBI" id="CHEBI:57692"/>
        <dbReference type="ChEBI" id="CHEBI:58307"/>
        <dbReference type="ChEBI" id="CHEBI:87487"/>
        <dbReference type="ChEBI" id="CHEBI:87488"/>
        <dbReference type="EC" id="1.3.8.1"/>
    </reaction>
</comment>
<comment type="cofactor">
    <cofactor evidence="2 8">
        <name>FAD</name>
        <dbReference type="ChEBI" id="CHEBI:57692"/>
    </cofactor>
</comment>
<comment type="pathway">
    <text evidence="8 9">Lipid metabolism; butanoate metabolism.</text>
</comment>
<comment type="subcellular location">
    <subcellularLocation>
        <location evidence="4">Cytoplasm</location>
    </subcellularLocation>
</comment>
<comment type="induction">
    <text evidence="3 4">Highly expressed during syntrophic growth with butyrate (at protein level) (PubMed:19648244, PubMed:23468890). Seems to be constitutively expressed (PubMed:23468890).</text>
</comment>
<comment type="similarity">
    <text evidence="7">Belongs to the acyl-CoA dehydrogenase family.</text>
</comment>
<sequence>MAHENYLYQMRDIKFAVKEWLDMNKLLSCDAYKDYYGIDDIDAFLDVNFKVCRDVLCPANKEADDPGCKFVGGDTQAVITPEVFKNAYNTVCEAGLGPQFSDRSAEGRMPLVWEAPILEMQSGASPSIVMFWCLTAGACTVIQHNASEELKERFLPKMYSGEWGGTMGLTEPGAGSEVGAVATKCFPTDTPGLYKIKGQKCFITSGDHDLASNIIHLVLAKTPDAKPGTSGINCLIVPKFWVNEDGTQGAWNDVTSTGIEHKMGIHGSSTLSLSFGENDNCYGWMIGDGPVDGRGKGMAQMFQMMNEERLNTGTFAQGCIGSAYYAALDYCKMRVQSPKFTDPKGPSVRIIEHEDVRRMLLFQKSIMEACRALLYTTYFYQDLSHDAADPAEREYYDDMTMIQIPLCKAYVSDMAWISTEQAIQCLGGYGFIEEYAPAELARDCKIYSLWEGTNFIQAQDFNNRKTTMKKGEPMKKWVAQIADFLATKKDPAFADEFAMMDDAFSAYNEILSTKEAWRASNPQLVQLFATRMLHAASMMICGKLMLDQALLAAKKLAELGEDHFDAMFYKGKIATARFYVMNVVPGVFGTLKAMKVADTSAIDMPEEAFM</sequence>
<proteinExistence type="evidence at protein level"/>
<reference key="1">
    <citation type="journal article" date="2010" name="Environ. Microbiol.">
        <title>The genome of Syntrophomonas wolfei: new insights into syntrophic metabolism and biohydrogen production.</title>
        <authorList>
            <person name="Sieber J.R."/>
            <person name="Sims D.R."/>
            <person name="Han C."/>
            <person name="Kim E."/>
            <person name="Lykidis A."/>
            <person name="Lapidus A.L."/>
            <person name="McDonnald E."/>
            <person name="Rohlin L."/>
            <person name="Culley D.E."/>
            <person name="Gunsalus R."/>
            <person name="McInerney M.J."/>
        </authorList>
    </citation>
    <scope>NUCLEOTIDE SEQUENCE [LARGE SCALE GENOMIC DNA]</scope>
    <source>
        <strain>DSM 2245B / Goettingen</strain>
    </source>
</reference>
<reference key="2">
    <citation type="journal article" date="2009" name="J. Bacteriol.">
        <title>Involvement of NADH:acceptor oxidoreductase and butyryl coenzyme A dehydrogenase in reversed electron transport during syntrophic butyrate oxidation by Syntrophomonas wolfei.</title>
        <authorList>
            <person name="Mueller N."/>
            <person name="Schleheck D."/>
            <person name="Schink B."/>
        </authorList>
    </citation>
    <scope>IDENTIFICATION BY MASS SPECTROMETRY</scope>
    <scope>FUNCTION</scope>
    <scope>CATALYTIC ACTIVITY</scope>
    <scope>COFACTOR</scope>
    <scope>INDUCTION</scope>
    <scope>PATHWAY</scope>
</reference>
<reference key="3">
    <citation type="journal article" date="2013" name="PLoS ONE">
        <title>A proteomic view at the biochemistry of syntrophic butyrate oxidation in Syntrophomonas wolfei.</title>
        <authorList>
            <person name="Schmidt A."/>
            <person name="Mueller N."/>
            <person name="Schink B."/>
            <person name="Schleheck D."/>
        </authorList>
    </citation>
    <scope>IDENTIFICATION BY MASS SPECTROMETRY</scope>
    <scope>INDUCTION</scope>
    <scope>SUBCELLULAR LOCATION</scope>
    <scope>FUNCTION</scope>
    <scope>PATHWAY</scope>
</reference>
<gene>
    <name evidence="10" type="ordered locus">Swol_1933</name>
</gene>
<organism>
    <name type="scientific">Syntrophomonas wolfei subsp. wolfei (strain DSM 2245B / Goettingen)</name>
    <dbReference type="NCBI Taxonomy" id="335541"/>
    <lineage>
        <taxon>Bacteria</taxon>
        <taxon>Bacillati</taxon>
        <taxon>Bacillota</taxon>
        <taxon>Clostridia</taxon>
        <taxon>Eubacteriales</taxon>
        <taxon>Syntrophomonadaceae</taxon>
        <taxon>Syntrophomonas</taxon>
    </lineage>
</organism>
<accession>Q0AVM4</accession>